<reference key="1">
    <citation type="submission" date="2008-01" db="EMBL/GenBank/DDBJ databases">
        <title>Complete sequence of Thermoanaerobacter pseudethanolicus 39E.</title>
        <authorList>
            <person name="Copeland A."/>
            <person name="Lucas S."/>
            <person name="Lapidus A."/>
            <person name="Barry K."/>
            <person name="Glavina del Rio T."/>
            <person name="Dalin E."/>
            <person name="Tice H."/>
            <person name="Pitluck S."/>
            <person name="Bruce D."/>
            <person name="Goodwin L."/>
            <person name="Saunders E."/>
            <person name="Brettin T."/>
            <person name="Detter J.C."/>
            <person name="Han C."/>
            <person name="Schmutz J."/>
            <person name="Larimer F."/>
            <person name="Land M."/>
            <person name="Hauser L."/>
            <person name="Kyrpides N."/>
            <person name="Lykidis A."/>
            <person name="Hemme C."/>
            <person name="Fields M.W."/>
            <person name="He Z."/>
            <person name="Zhou J."/>
            <person name="Richardson P."/>
        </authorList>
    </citation>
    <scope>NUCLEOTIDE SEQUENCE [LARGE SCALE GENOMIC DNA]</scope>
    <source>
        <strain>ATCC 33223 / DSM 2355 / 39E</strain>
    </source>
</reference>
<feature type="chain" id="PRO_1000194836" description="Phosphoribosylformylglycinamidine synthase subunit PurL">
    <location>
        <begin position="1"/>
        <end position="733"/>
    </location>
</feature>
<feature type="region of interest" description="Disordered" evidence="2">
    <location>
        <begin position="212"/>
        <end position="232"/>
    </location>
</feature>
<feature type="active site" evidence="1">
    <location>
        <position position="41"/>
    </location>
</feature>
<feature type="active site" description="Proton acceptor" evidence="1">
    <location>
        <position position="87"/>
    </location>
</feature>
<feature type="binding site" evidence="1">
    <location>
        <position position="44"/>
    </location>
    <ligand>
        <name>ATP</name>
        <dbReference type="ChEBI" id="CHEBI:30616"/>
    </ligand>
</feature>
<feature type="binding site" evidence="1">
    <location>
        <position position="83"/>
    </location>
    <ligand>
        <name>ATP</name>
        <dbReference type="ChEBI" id="CHEBI:30616"/>
    </ligand>
</feature>
<feature type="binding site" evidence="1">
    <location>
        <position position="85"/>
    </location>
    <ligand>
        <name>Mg(2+)</name>
        <dbReference type="ChEBI" id="CHEBI:18420"/>
        <label>1</label>
    </ligand>
</feature>
<feature type="binding site" evidence="1">
    <location>
        <begin position="86"/>
        <end position="89"/>
    </location>
    <ligand>
        <name>substrate</name>
    </ligand>
</feature>
<feature type="binding site" evidence="1">
    <location>
        <position position="108"/>
    </location>
    <ligand>
        <name>substrate</name>
    </ligand>
</feature>
<feature type="binding site" evidence="1">
    <location>
        <position position="109"/>
    </location>
    <ligand>
        <name>Mg(2+)</name>
        <dbReference type="ChEBI" id="CHEBI:18420"/>
        <label>2</label>
    </ligand>
</feature>
<feature type="binding site" evidence="1">
    <location>
        <position position="232"/>
    </location>
    <ligand>
        <name>substrate</name>
    </ligand>
</feature>
<feature type="binding site" evidence="1">
    <location>
        <position position="260"/>
    </location>
    <ligand>
        <name>Mg(2+)</name>
        <dbReference type="ChEBI" id="CHEBI:18420"/>
        <label>2</label>
    </ligand>
</feature>
<feature type="binding site" evidence="1">
    <location>
        <begin position="304"/>
        <end position="306"/>
    </location>
    <ligand>
        <name>substrate</name>
    </ligand>
</feature>
<feature type="binding site" evidence="1">
    <location>
        <position position="488"/>
    </location>
    <ligand>
        <name>ATP</name>
        <dbReference type="ChEBI" id="CHEBI:30616"/>
    </ligand>
</feature>
<feature type="binding site" evidence="1">
    <location>
        <position position="525"/>
    </location>
    <ligand>
        <name>ATP</name>
        <dbReference type="ChEBI" id="CHEBI:30616"/>
    </ligand>
</feature>
<feature type="binding site" evidence="1">
    <location>
        <position position="526"/>
    </location>
    <ligand>
        <name>Mg(2+)</name>
        <dbReference type="ChEBI" id="CHEBI:18420"/>
        <label>1</label>
    </ligand>
</feature>
<feature type="binding site" evidence="1">
    <location>
        <position position="528"/>
    </location>
    <ligand>
        <name>substrate</name>
    </ligand>
</feature>
<comment type="function">
    <text evidence="1">Part of the phosphoribosylformylglycinamidine synthase complex involved in the purines biosynthetic pathway. Catalyzes the ATP-dependent conversion of formylglycinamide ribonucleotide (FGAR) and glutamine to yield formylglycinamidine ribonucleotide (FGAM) and glutamate. The FGAM synthase complex is composed of three subunits. PurQ produces an ammonia molecule by converting glutamine to glutamate. PurL transfers the ammonia molecule to FGAR to form FGAM in an ATP-dependent manner. PurS interacts with PurQ and PurL and is thought to assist in the transfer of the ammonia molecule from PurQ to PurL.</text>
</comment>
<comment type="catalytic activity">
    <reaction evidence="1">
        <text>N(2)-formyl-N(1)-(5-phospho-beta-D-ribosyl)glycinamide + L-glutamine + ATP + H2O = 2-formamido-N(1)-(5-O-phospho-beta-D-ribosyl)acetamidine + L-glutamate + ADP + phosphate + H(+)</text>
        <dbReference type="Rhea" id="RHEA:17129"/>
        <dbReference type="ChEBI" id="CHEBI:15377"/>
        <dbReference type="ChEBI" id="CHEBI:15378"/>
        <dbReference type="ChEBI" id="CHEBI:29985"/>
        <dbReference type="ChEBI" id="CHEBI:30616"/>
        <dbReference type="ChEBI" id="CHEBI:43474"/>
        <dbReference type="ChEBI" id="CHEBI:58359"/>
        <dbReference type="ChEBI" id="CHEBI:147286"/>
        <dbReference type="ChEBI" id="CHEBI:147287"/>
        <dbReference type="ChEBI" id="CHEBI:456216"/>
        <dbReference type="EC" id="6.3.5.3"/>
    </reaction>
</comment>
<comment type="pathway">
    <text evidence="1">Purine metabolism; IMP biosynthesis via de novo pathway; 5-amino-1-(5-phospho-D-ribosyl)imidazole from N(2)-formyl-N(1)-(5-phospho-D-ribosyl)glycinamide: step 1/2.</text>
</comment>
<comment type="subunit">
    <text evidence="1">Monomer. Part of the FGAM synthase complex composed of 1 PurL, 1 PurQ and 2 PurS subunits.</text>
</comment>
<comment type="subcellular location">
    <subcellularLocation>
        <location evidence="1">Cytoplasm</location>
    </subcellularLocation>
</comment>
<comment type="similarity">
    <text evidence="1">Belongs to the FGAMS family.</text>
</comment>
<gene>
    <name evidence="1" type="primary">purL</name>
    <name type="ordered locus">Teth39_1713</name>
</gene>
<protein>
    <recommendedName>
        <fullName evidence="1">Phosphoribosylformylglycinamidine synthase subunit PurL</fullName>
        <shortName evidence="1">FGAM synthase</shortName>
        <ecNumber evidence="1">6.3.5.3</ecNumber>
    </recommendedName>
    <alternativeName>
        <fullName evidence="1">Formylglycinamide ribonucleotide amidotransferase subunit II</fullName>
        <shortName evidence="1">FGAR amidotransferase II</shortName>
        <shortName evidence="1">FGAR-AT II</shortName>
    </alternativeName>
    <alternativeName>
        <fullName evidence="1">Glutamine amidotransferase PurL</fullName>
    </alternativeName>
    <alternativeName>
        <fullName evidence="1">Phosphoribosylformylglycinamidine synthase subunit II</fullName>
    </alternativeName>
</protein>
<organism>
    <name type="scientific">Thermoanaerobacter pseudethanolicus (strain ATCC 33223 / 39E)</name>
    <name type="common">Clostridium thermohydrosulfuricum</name>
    <dbReference type="NCBI Taxonomy" id="340099"/>
    <lineage>
        <taxon>Bacteria</taxon>
        <taxon>Bacillati</taxon>
        <taxon>Bacillota</taxon>
        <taxon>Clostridia</taxon>
        <taxon>Thermoanaerobacterales</taxon>
        <taxon>Thermoanaerobacteraceae</taxon>
        <taxon>Thermoanaerobacter</taxon>
    </lineage>
</organism>
<proteinExistence type="inferred from homology"/>
<sequence length="733" mass="80376">MDKIWRELGLTDEEYEKIISILGREPNITEIGMYSVMWSEHCAYKNSKPLLKYLPTKGERVIQGPGENAGVLDIGDNLAVVMKIESHNHPSAIEPYQGAATGVGGIIRDIFTMGARPIALLDSLRFGIPDDKRTKYLIENVVAGIADYGNCIGIPTVGGDTYFEESYKGNPLVNAMCVGIVEKDKIKKGIAKGIGNPVMIVGATTGRDGIGGASFASQELSEESEEKRPSVQVGDPFMEKLLLEACLELFETDAVVAIQDMGAAGLTSSSCEMASRGGVGMELDLDKVPLREKGMTPYEIMLSESQERMLVVVEKGKEEDVQKVFKKWGLNAATIGKITDDGMIRVIKEGKIVAEVPAKSLAEDAPQYIREEEVPKWQEDVNKLNINEVKPPEDMNKALKDVISSLNIASKEWIYSQYDYMVRTDTAITPGMDAAVVRIKGTKKAIALTTDCNGRYCYLDPYIGSQIAVAEAARNLCMVGAKPIGVTDCLNFGNPEKKEIYWQLKNSIFGIAKACETLQIPVVSGNVSLYNENEEGAIYPTPVIGMAGLIEDVSKICTMDFKKERDVIIILGENKGEIGGSEYLKVCFGMVKGQPPQIDLEEEKRLQELVLKLIDKGLINSSHDISEGGFAAALVESAISGKKGAKISLQTSLREDIELFSESPPRALITVSPEKVEEVLKIAYEYQVPAQKVGVVEGKKIAIEVNGKKIIDLPLEVLEESWRGRIKWEMERN</sequence>
<keyword id="KW-0067">ATP-binding</keyword>
<keyword id="KW-0963">Cytoplasm</keyword>
<keyword id="KW-0436">Ligase</keyword>
<keyword id="KW-0460">Magnesium</keyword>
<keyword id="KW-0479">Metal-binding</keyword>
<keyword id="KW-0547">Nucleotide-binding</keyword>
<keyword id="KW-0658">Purine biosynthesis</keyword>
<keyword id="KW-1185">Reference proteome</keyword>
<dbReference type="EC" id="6.3.5.3" evidence="1"/>
<dbReference type="EMBL" id="CP000924">
    <property type="protein sequence ID" value="ABY95350.1"/>
    <property type="molecule type" value="Genomic_DNA"/>
</dbReference>
<dbReference type="RefSeq" id="WP_012269567.1">
    <property type="nucleotide sequence ID" value="NC_010321.1"/>
</dbReference>
<dbReference type="SMR" id="B0KBQ5"/>
<dbReference type="STRING" id="340099.Teth39_1713"/>
<dbReference type="KEGG" id="tpd:Teth39_1713"/>
<dbReference type="eggNOG" id="COG0046">
    <property type="taxonomic scope" value="Bacteria"/>
</dbReference>
<dbReference type="HOGENOM" id="CLU_003100_0_1_9"/>
<dbReference type="UniPathway" id="UPA00074">
    <property type="reaction ID" value="UER00128"/>
</dbReference>
<dbReference type="Proteomes" id="UP000002156">
    <property type="component" value="Chromosome"/>
</dbReference>
<dbReference type="GO" id="GO:0005737">
    <property type="term" value="C:cytoplasm"/>
    <property type="evidence" value="ECO:0007669"/>
    <property type="project" value="UniProtKB-SubCell"/>
</dbReference>
<dbReference type="GO" id="GO:0005524">
    <property type="term" value="F:ATP binding"/>
    <property type="evidence" value="ECO:0007669"/>
    <property type="project" value="UniProtKB-UniRule"/>
</dbReference>
<dbReference type="GO" id="GO:0000287">
    <property type="term" value="F:magnesium ion binding"/>
    <property type="evidence" value="ECO:0007669"/>
    <property type="project" value="UniProtKB-UniRule"/>
</dbReference>
<dbReference type="GO" id="GO:0004642">
    <property type="term" value="F:phosphoribosylformylglycinamidine synthase activity"/>
    <property type="evidence" value="ECO:0007669"/>
    <property type="project" value="UniProtKB-UniRule"/>
</dbReference>
<dbReference type="GO" id="GO:0006189">
    <property type="term" value="P:'de novo' IMP biosynthetic process"/>
    <property type="evidence" value="ECO:0007669"/>
    <property type="project" value="UniProtKB-UniRule"/>
</dbReference>
<dbReference type="CDD" id="cd02203">
    <property type="entry name" value="PurL_repeat1"/>
    <property type="match status" value="1"/>
</dbReference>
<dbReference type="CDD" id="cd02204">
    <property type="entry name" value="PurL_repeat2"/>
    <property type="match status" value="1"/>
</dbReference>
<dbReference type="FunFam" id="3.30.1330.10:FF:000004">
    <property type="entry name" value="Phosphoribosylformylglycinamidine synthase subunit PurL"/>
    <property type="match status" value="1"/>
</dbReference>
<dbReference type="FunFam" id="3.90.650.10:FF:000009">
    <property type="entry name" value="Phosphoribosylformylglycinamidine synthase subunit PurL"/>
    <property type="match status" value="1"/>
</dbReference>
<dbReference type="Gene3D" id="3.90.650.10">
    <property type="entry name" value="PurM-like C-terminal domain"/>
    <property type="match status" value="2"/>
</dbReference>
<dbReference type="Gene3D" id="3.30.1330.10">
    <property type="entry name" value="PurM-like, N-terminal domain"/>
    <property type="match status" value="2"/>
</dbReference>
<dbReference type="HAMAP" id="MF_00420">
    <property type="entry name" value="PurL_2"/>
    <property type="match status" value="1"/>
</dbReference>
<dbReference type="InterPro" id="IPR010074">
    <property type="entry name" value="PRibForGlyAmidine_synth_PurL"/>
</dbReference>
<dbReference type="InterPro" id="IPR041609">
    <property type="entry name" value="PurL_linker"/>
</dbReference>
<dbReference type="InterPro" id="IPR010918">
    <property type="entry name" value="PurM-like_C_dom"/>
</dbReference>
<dbReference type="InterPro" id="IPR036676">
    <property type="entry name" value="PurM-like_C_sf"/>
</dbReference>
<dbReference type="InterPro" id="IPR016188">
    <property type="entry name" value="PurM-like_N"/>
</dbReference>
<dbReference type="InterPro" id="IPR036921">
    <property type="entry name" value="PurM-like_N_sf"/>
</dbReference>
<dbReference type="NCBIfam" id="TIGR01736">
    <property type="entry name" value="FGAM_synth_II"/>
    <property type="match status" value="1"/>
</dbReference>
<dbReference type="NCBIfam" id="NF002290">
    <property type="entry name" value="PRK01213.1"/>
    <property type="match status" value="1"/>
</dbReference>
<dbReference type="PANTHER" id="PTHR43555">
    <property type="entry name" value="PHOSPHORIBOSYLFORMYLGLYCINAMIDINE SYNTHASE SUBUNIT PURL"/>
    <property type="match status" value="1"/>
</dbReference>
<dbReference type="PANTHER" id="PTHR43555:SF1">
    <property type="entry name" value="PHOSPHORIBOSYLFORMYLGLYCINAMIDINE SYNTHASE SUBUNIT PURL"/>
    <property type="match status" value="1"/>
</dbReference>
<dbReference type="Pfam" id="PF00586">
    <property type="entry name" value="AIRS"/>
    <property type="match status" value="2"/>
</dbReference>
<dbReference type="Pfam" id="PF02769">
    <property type="entry name" value="AIRS_C"/>
    <property type="match status" value="2"/>
</dbReference>
<dbReference type="Pfam" id="PF18072">
    <property type="entry name" value="FGAR-AT_linker"/>
    <property type="match status" value="1"/>
</dbReference>
<dbReference type="PIRSF" id="PIRSF001587">
    <property type="entry name" value="FGAM_synthase_II"/>
    <property type="match status" value="1"/>
</dbReference>
<dbReference type="SUPFAM" id="SSF56042">
    <property type="entry name" value="PurM C-terminal domain-like"/>
    <property type="match status" value="2"/>
</dbReference>
<dbReference type="SUPFAM" id="SSF55326">
    <property type="entry name" value="PurM N-terminal domain-like"/>
    <property type="match status" value="2"/>
</dbReference>
<accession>B0KBQ5</accession>
<name>PURL_THEP3</name>
<evidence type="ECO:0000255" key="1">
    <source>
        <dbReference type="HAMAP-Rule" id="MF_00420"/>
    </source>
</evidence>
<evidence type="ECO:0000256" key="2">
    <source>
        <dbReference type="SAM" id="MobiDB-lite"/>
    </source>
</evidence>